<dbReference type="EMBL" id="CP000237">
    <property type="protein sequence ID" value="ABD46448.1"/>
    <property type="molecule type" value="Genomic_DNA"/>
</dbReference>
<dbReference type="RefSeq" id="WP_011451789.1">
    <property type="nucleotide sequence ID" value="NC_007798.1"/>
</dbReference>
<dbReference type="SMR" id="Q2GE13"/>
<dbReference type="STRING" id="222891.NSE_0396"/>
<dbReference type="KEGG" id="nse:NSE_0396"/>
<dbReference type="eggNOG" id="COG0356">
    <property type="taxonomic scope" value="Bacteria"/>
</dbReference>
<dbReference type="HOGENOM" id="CLU_041018_0_2_5"/>
<dbReference type="OrthoDB" id="9809130at2"/>
<dbReference type="Proteomes" id="UP000001942">
    <property type="component" value="Chromosome"/>
</dbReference>
<dbReference type="GO" id="GO:0005886">
    <property type="term" value="C:plasma membrane"/>
    <property type="evidence" value="ECO:0007669"/>
    <property type="project" value="UniProtKB-SubCell"/>
</dbReference>
<dbReference type="GO" id="GO:0045259">
    <property type="term" value="C:proton-transporting ATP synthase complex"/>
    <property type="evidence" value="ECO:0007669"/>
    <property type="project" value="UniProtKB-KW"/>
</dbReference>
<dbReference type="GO" id="GO:0046933">
    <property type="term" value="F:proton-transporting ATP synthase activity, rotational mechanism"/>
    <property type="evidence" value="ECO:0007669"/>
    <property type="project" value="UniProtKB-UniRule"/>
</dbReference>
<dbReference type="CDD" id="cd00310">
    <property type="entry name" value="ATP-synt_Fo_a_6"/>
    <property type="match status" value="1"/>
</dbReference>
<dbReference type="Gene3D" id="1.20.120.220">
    <property type="entry name" value="ATP synthase, F0 complex, subunit A"/>
    <property type="match status" value="1"/>
</dbReference>
<dbReference type="HAMAP" id="MF_01393">
    <property type="entry name" value="ATP_synth_a_bact"/>
    <property type="match status" value="1"/>
</dbReference>
<dbReference type="InterPro" id="IPR000568">
    <property type="entry name" value="ATP_synth_F0_asu"/>
</dbReference>
<dbReference type="InterPro" id="IPR023011">
    <property type="entry name" value="ATP_synth_F0_asu_AS"/>
</dbReference>
<dbReference type="InterPro" id="IPR045083">
    <property type="entry name" value="ATP_synth_F0_asu_bact/mt"/>
</dbReference>
<dbReference type="InterPro" id="IPR035908">
    <property type="entry name" value="F0_ATP_A_sf"/>
</dbReference>
<dbReference type="NCBIfam" id="TIGR01131">
    <property type="entry name" value="ATP_synt_6_or_A"/>
    <property type="match status" value="1"/>
</dbReference>
<dbReference type="NCBIfam" id="NF004482">
    <property type="entry name" value="PRK05815.2-4"/>
    <property type="match status" value="1"/>
</dbReference>
<dbReference type="PANTHER" id="PTHR11410">
    <property type="entry name" value="ATP SYNTHASE SUBUNIT A"/>
    <property type="match status" value="1"/>
</dbReference>
<dbReference type="PANTHER" id="PTHR11410:SF0">
    <property type="entry name" value="ATP SYNTHASE SUBUNIT A"/>
    <property type="match status" value="1"/>
</dbReference>
<dbReference type="Pfam" id="PF00119">
    <property type="entry name" value="ATP-synt_A"/>
    <property type="match status" value="1"/>
</dbReference>
<dbReference type="PRINTS" id="PR00123">
    <property type="entry name" value="ATPASEA"/>
</dbReference>
<dbReference type="SUPFAM" id="SSF81336">
    <property type="entry name" value="F1F0 ATP synthase subunit A"/>
    <property type="match status" value="1"/>
</dbReference>
<dbReference type="PROSITE" id="PS00449">
    <property type="entry name" value="ATPASE_A"/>
    <property type="match status" value="1"/>
</dbReference>
<keyword id="KW-0066">ATP synthesis</keyword>
<keyword id="KW-0997">Cell inner membrane</keyword>
<keyword id="KW-1003">Cell membrane</keyword>
<keyword id="KW-0138">CF(0)</keyword>
<keyword id="KW-0375">Hydrogen ion transport</keyword>
<keyword id="KW-0406">Ion transport</keyword>
<keyword id="KW-0472">Membrane</keyword>
<keyword id="KW-0812">Transmembrane</keyword>
<keyword id="KW-1133">Transmembrane helix</keyword>
<keyword id="KW-0813">Transport</keyword>
<proteinExistence type="inferred from homology"/>
<feature type="chain" id="PRO_0000362352" description="ATP synthase subunit a">
    <location>
        <begin position="1"/>
        <end position="243"/>
    </location>
</feature>
<feature type="transmembrane region" description="Helical" evidence="1">
    <location>
        <begin position="28"/>
        <end position="48"/>
    </location>
</feature>
<feature type="transmembrane region" description="Helical" evidence="1">
    <location>
        <begin position="52"/>
        <end position="72"/>
    </location>
</feature>
<feature type="transmembrane region" description="Helical" evidence="1">
    <location>
        <begin position="83"/>
        <end position="103"/>
    </location>
</feature>
<feature type="transmembrane region" description="Helical" evidence="1">
    <location>
        <begin position="114"/>
        <end position="134"/>
    </location>
</feature>
<feature type="transmembrane region" description="Helical" evidence="1">
    <location>
        <begin position="141"/>
        <end position="161"/>
    </location>
</feature>
<feature type="transmembrane region" description="Helical" evidence="1">
    <location>
        <begin position="177"/>
        <end position="197"/>
    </location>
</feature>
<feature type="transmembrane region" description="Helical" evidence="1">
    <location>
        <begin position="200"/>
        <end position="220"/>
    </location>
</feature>
<feature type="transmembrane region" description="Helical" evidence="1">
    <location>
        <begin position="221"/>
        <end position="241"/>
    </location>
</feature>
<name>ATP6_NEOSM</name>
<sequence length="243" mass="27096">MSPLKQFEIFPLIRLPEFFGWDINFTNSSLYMVLTVVFASLFLFAGVFRGKVIPGPMQSFVEIVCSFVLGIIKGSCGKAGSDYFPLILSVFLYVLFANLVGMLPLPMSFTVTSHIVVTLALAMVVFIFVTLIGLKKQGMGFFAMFLPDGTPNWIAPLMIFLEVCTYLFRPISLAIRLTANMIAGHTILKVIAGFVYPTSLLISPLSFLFVVVLIVFEVFIAMLQAYIFVMLTCVYLNDSLFKH</sequence>
<protein>
    <recommendedName>
        <fullName evidence="1">ATP synthase subunit a</fullName>
    </recommendedName>
    <alternativeName>
        <fullName evidence="1">ATP synthase F0 sector subunit a</fullName>
    </alternativeName>
    <alternativeName>
        <fullName evidence="1">F-ATPase subunit 6</fullName>
    </alternativeName>
</protein>
<organism>
    <name type="scientific">Neorickettsia sennetsu (strain ATCC VR-367 / Miyayama)</name>
    <name type="common">Ehrlichia sennetsu</name>
    <dbReference type="NCBI Taxonomy" id="222891"/>
    <lineage>
        <taxon>Bacteria</taxon>
        <taxon>Pseudomonadati</taxon>
        <taxon>Pseudomonadota</taxon>
        <taxon>Alphaproteobacteria</taxon>
        <taxon>Rickettsiales</taxon>
        <taxon>Anaplasmataceae</taxon>
        <taxon>Neorickettsia</taxon>
    </lineage>
</organism>
<evidence type="ECO:0000255" key="1">
    <source>
        <dbReference type="HAMAP-Rule" id="MF_01393"/>
    </source>
</evidence>
<reference key="1">
    <citation type="journal article" date="2006" name="PLoS Genet.">
        <title>Comparative genomics of emerging human ehrlichiosis agents.</title>
        <authorList>
            <person name="Dunning Hotopp J.C."/>
            <person name="Lin M."/>
            <person name="Madupu R."/>
            <person name="Crabtree J."/>
            <person name="Angiuoli S.V."/>
            <person name="Eisen J.A."/>
            <person name="Seshadri R."/>
            <person name="Ren Q."/>
            <person name="Wu M."/>
            <person name="Utterback T.R."/>
            <person name="Smith S."/>
            <person name="Lewis M."/>
            <person name="Khouri H."/>
            <person name="Zhang C."/>
            <person name="Niu H."/>
            <person name="Lin Q."/>
            <person name="Ohashi N."/>
            <person name="Zhi N."/>
            <person name="Nelson W.C."/>
            <person name="Brinkac L.M."/>
            <person name="Dodson R.J."/>
            <person name="Rosovitz M.J."/>
            <person name="Sundaram J.P."/>
            <person name="Daugherty S.C."/>
            <person name="Davidsen T."/>
            <person name="Durkin A.S."/>
            <person name="Gwinn M.L."/>
            <person name="Haft D.H."/>
            <person name="Selengut J.D."/>
            <person name="Sullivan S.A."/>
            <person name="Zafar N."/>
            <person name="Zhou L."/>
            <person name="Benahmed F."/>
            <person name="Forberger H."/>
            <person name="Halpin R."/>
            <person name="Mulligan S."/>
            <person name="Robinson J."/>
            <person name="White O."/>
            <person name="Rikihisa Y."/>
            <person name="Tettelin H."/>
        </authorList>
    </citation>
    <scope>NUCLEOTIDE SEQUENCE [LARGE SCALE GENOMIC DNA]</scope>
    <source>
        <strain>ATCC VR-367 / Miyayama</strain>
    </source>
</reference>
<accession>Q2GE13</accession>
<comment type="function">
    <text evidence="1">Key component of the proton channel; it plays a direct role in the translocation of protons across the membrane.</text>
</comment>
<comment type="subunit">
    <text evidence="1">F-type ATPases have 2 components, CF(1) - the catalytic core - and CF(0) - the membrane proton channel. CF(1) has five subunits: alpha(3), beta(3), gamma(1), delta(1), epsilon(1). CF(0) has three main subunits: a(1), b(2) and c(9-12). The alpha and beta chains form an alternating ring which encloses part of the gamma chain. CF(1) is attached to CF(0) by a central stalk formed by the gamma and epsilon chains, while a peripheral stalk is formed by the delta and b chains.</text>
</comment>
<comment type="subcellular location">
    <subcellularLocation>
        <location evidence="1">Cell inner membrane</location>
        <topology evidence="1">Multi-pass membrane protein</topology>
    </subcellularLocation>
</comment>
<comment type="similarity">
    <text evidence="1">Belongs to the ATPase A chain family.</text>
</comment>
<gene>
    <name evidence="1" type="primary">atpB</name>
    <name type="ordered locus">NSE_0396</name>
</gene>